<proteinExistence type="inferred from homology"/>
<sequence length="431" mass="44890">MKILVIGSGGREHALAWKIAQSARVSEVLVAPGNAGTATEAKCRNVAIKVDDLDGLLALAQREAVALTVVGPEVPLVLGVVDRFHAAGLRIFGPTAKAAQLEGSKAFAKDFLARHGIPTAYYAVHTEVDAALAYVREKGTPIVVKADGLAAGKGVIVALTLAEAEDAVRDMLSGNAFGDAGARVVIEEFLDGEEASFISMVDGKHALPMATSQDHKRVGDGDTGPNTGGMGAYSPAPVVTPEVHARVMREVVEPTVQGMIADGVPFTGFLYAGLMIDAHGAPKVIEFNVRFGDPETQPVMLRLQSDLVDLLEAAIDGKLDGAHAQWDPRPSLGVVIAARPYPDTPVTGEVIAGLDAVPASAKVFHAGTALNAAGEVVSAGGRVLCVAALGDSVQDAQRTAYAGLKPIHWSSAFQRSDIGWRAIARERQAQG</sequence>
<protein>
    <recommendedName>
        <fullName evidence="2">Phosphoribosylamine--glycine ligase</fullName>
        <ecNumber evidence="2">6.3.4.13</ecNumber>
    </recommendedName>
    <alternativeName>
        <fullName evidence="2">GARS</fullName>
    </alternativeName>
    <alternativeName>
        <fullName evidence="2">Glycinamide ribonucleotide synthetase</fullName>
    </alternativeName>
    <alternativeName>
        <fullName evidence="2">Phosphoribosylglycinamide synthetase</fullName>
    </alternativeName>
</protein>
<name>PUR2_XANAC</name>
<accession>Q8PQ21</accession>
<keyword id="KW-0067">ATP-binding</keyword>
<keyword id="KW-0436">Ligase</keyword>
<keyword id="KW-0460">Magnesium</keyword>
<keyword id="KW-0464">Manganese</keyword>
<keyword id="KW-0479">Metal-binding</keyword>
<keyword id="KW-0547">Nucleotide-binding</keyword>
<keyword id="KW-0658">Purine biosynthesis</keyword>
<organism>
    <name type="scientific">Xanthomonas axonopodis pv. citri (strain 306)</name>
    <dbReference type="NCBI Taxonomy" id="190486"/>
    <lineage>
        <taxon>Bacteria</taxon>
        <taxon>Pseudomonadati</taxon>
        <taxon>Pseudomonadota</taxon>
        <taxon>Gammaproteobacteria</taxon>
        <taxon>Lysobacterales</taxon>
        <taxon>Lysobacteraceae</taxon>
        <taxon>Xanthomonas</taxon>
    </lineage>
</organism>
<comment type="catalytic activity">
    <reaction evidence="2">
        <text>5-phospho-beta-D-ribosylamine + glycine + ATP = N(1)-(5-phospho-beta-D-ribosyl)glycinamide + ADP + phosphate + H(+)</text>
        <dbReference type="Rhea" id="RHEA:17453"/>
        <dbReference type="ChEBI" id="CHEBI:15378"/>
        <dbReference type="ChEBI" id="CHEBI:30616"/>
        <dbReference type="ChEBI" id="CHEBI:43474"/>
        <dbReference type="ChEBI" id="CHEBI:57305"/>
        <dbReference type="ChEBI" id="CHEBI:58681"/>
        <dbReference type="ChEBI" id="CHEBI:143788"/>
        <dbReference type="ChEBI" id="CHEBI:456216"/>
        <dbReference type="EC" id="6.3.4.13"/>
    </reaction>
</comment>
<comment type="cofactor">
    <cofactor evidence="1">
        <name>Mg(2+)</name>
        <dbReference type="ChEBI" id="CHEBI:18420"/>
    </cofactor>
    <cofactor evidence="1">
        <name>Mn(2+)</name>
        <dbReference type="ChEBI" id="CHEBI:29035"/>
    </cofactor>
    <text evidence="1">Binds 1 Mg(2+) or Mn(2+) ion per subunit.</text>
</comment>
<comment type="pathway">
    <text evidence="2">Purine metabolism; IMP biosynthesis via de novo pathway; N(1)-(5-phospho-D-ribosyl)glycinamide from 5-phospho-alpha-D-ribose 1-diphosphate: step 2/2.</text>
</comment>
<comment type="similarity">
    <text evidence="2">Belongs to the GARS family.</text>
</comment>
<dbReference type="EC" id="6.3.4.13" evidence="2"/>
<dbReference type="EMBL" id="AE008923">
    <property type="protein sequence ID" value="AAM35400.1"/>
    <property type="molecule type" value="Genomic_DNA"/>
</dbReference>
<dbReference type="RefSeq" id="WP_011050358.1">
    <property type="nucleotide sequence ID" value="NC_003919.1"/>
</dbReference>
<dbReference type="SMR" id="Q8PQ21"/>
<dbReference type="GeneID" id="66909717"/>
<dbReference type="KEGG" id="xac:XAC0511"/>
<dbReference type="eggNOG" id="COG0151">
    <property type="taxonomic scope" value="Bacteria"/>
</dbReference>
<dbReference type="HOGENOM" id="CLU_027420_3_1_6"/>
<dbReference type="UniPathway" id="UPA00074">
    <property type="reaction ID" value="UER00125"/>
</dbReference>
<dbReference type="Proteomes" id="UP000000576">
    <property type="component" value="Chromosome"/>
</dbReference>
<dbReference type="GO" id="GO:0005524">
    <property type="term" value="F:ATP binding"/>
    <property type="evidence" value="ECO:0007669"/>
    <property type="project" value="UniProtKB-KW"/>
</dbReference>
<dbReference type="GO" id="GO:0046872">
    <property type="term" value="F:metal ion binding"/>
    <property type="evidence" value="ECO:0007669"/>
    <property type="project" value="UniProtKB-KW"/>
</dbReference>
<dbReference type="GO" id="GO:0004637">
    <property type="term" value="F:phosphoribosylamine-glycine ligase activity"/>
    <property type="evidence" value="ECO:0007669"/>
    <property type="project" value="UniProtKB-UniRule"/>
</dbReference>
<dbReference type="GO" id="GO:0006189">
    <property type="term" value="P:'de novo' IMP biosynthetic process"/>
    <property type="evidence" value="ECO:0007669"/>
    <property type="project" value="UniProtKB-UniRule"/>
</dbReference>
<dbReference type="GO" id="GO:0009113">
    <property type="term" value="P:purine nucleobase biosynthetic process"/>
    <property type="evidence" value="ECO:0007669"/>
    <property type="project" value="InterPro"/>
</dbReference>
<dbReference type="FunFam" id="3.30.470.20:FF:000031">
    <property type="entry name" value="Phosphoribosylamine--glycine ligase"/>
    <property type="match status" value="1"/>
</dbReference>
<dbReference type="FunFam" id="3.40.50.20:FF:000006">
    <property type="entry name" value="Phosphoribosylamine--glycine ligase, chloroplastic"/>
    <property type="match status" value="1"/>
</dbReference>
<dbReference type="FunFam" id="3.30.1490.20:FF:000006">
    <property type="entry name" value="phosphoribosylamine--glycine ligase, chloroplastic-like"/>
    <property type="match status" value="1"/>
</dbReference>
<dbReference type="Gene3D" id="3.40.50.20">
    <property type="match status" value="1"/>
</dbReference>
<dbReference type="Gene3D" id="3.30.1490.20">
    <property type="entry name" value="ATP-grasp fold, A domain"/>
    <property type="match status" value="1"/>
</dbReference>
<dbReference type="Gene3D" id="3.30.470.20">
    <property type="entry name" value="ATP-grasp fold, B domain"/>
    <property type="match status" value="1"/>
</dbReference>
<dbReference type="Gene3D" id="3.90.600.10">
    <property type="entry name" value="Phosphoribosylglycinamide synthetase, C-terminal domain"/>
    <property type="match status" value="1"/>
</dbReference>
<dbReference type="HAMAP" id="MF_00138">
    <property type="entry name" value="GARS"/>
    <property type="match status" value="1"/>
</dbReference>
<dbReference type="InterPro" id="IPR011761">
    <property type="entry name" value="ATP-grasp"/>
</dbReference>
<dbReference type="InterPro" id="IPR013815">
    <property type="entry name" value="ATP_grasp_subdomain_1"/>
</dbReference>
<dbReference type="InterPro" id="IPR016185">
    <property type="entry name" value="PreATP-grasp_dom_sf"/>
</dbReference>
<dbReference type="InterPro" id="IPR020561">
    <property type="entry name" value="PRibGlycinamid_synth_ATP-grasp"/>
</dbReference>
<dbReference type="InterPro" id="IPR000115">
    <property type="entry name" value="PRibGlycinamide_synth"/>
</dbReference>
<dbReference type="InterPro" id="IPR020560">
    <property type="entry name" value="PRibGlycinamide_synth_C-dom"/>
</dbReference>
<dbReference type="InterPro" id="IPR037123">
    <property type="entry name" value="PRibGlycinamide_synth_C_sf"/>
</dbReference>
<dbReference type="InterPro" id="IPR020559">
    <property type="entry name" value="PRibGlycinamide_synth_CS"/>
</dbReference>
<dbReference type="InterPro" id="IPR020562">
    <property type="entry name" value="PRibGlycinamide_synth_N"/>
</dbReference>
<dbReference type="InterPro" id="IPR011054">
    <property type="entry name" value="Rudment_hybrid_motif"/>
</dbReference>
<dbReference type="NCBIfam" id="TIGR00877">
    <property type="entry name" value="purD"/>
    <property type="match status" value="1"/>
</dbReference>
<dbReference type="PANTHER" id="PTHR43472">
    <property type="entry name" value="PHOSPHORIBOSYLAMINE--GLYCINE LIGASE"/>
    <property type="match status" value="1"/>
</dbReference>
<dbReference type="PANTHER" id="PTHR43472:SF1">
    <property type="entry name" value="PHOSPHORIBOSYLAMINE--GLYCINE LIGASE, CHLOROPLASTIC"/>
    <property type="match status" value="1"/>
</dbReference>
<dbReference type="Pfam" id="PF01071">
    <property type="entry name" value="GARS_A"/>
    <property type="match status" value="1"/>
</dbReference>
<dbReference type="Pfam" id="PF02843">
    <property type="entry name" value="GARS_C"/>
    <property type="match status" value="1"/>
</dbReference>
<dbReference type="Pfam" id="PF02844">
    <property type="entry name" value="GARS_N"/>
    <property type="match status" value="1"/>
</dbReference>
<dbReference type="SMART" id="SM01209">
    <property type="entry name" value="GARS_A"/>
    <property type="match status" value="1"/>
</dbReference>
<dbReference type="SMART" id="SM01210">
    <property type="entry name" value="GARS_C"/>
    <property type="match status" value="1"/>
</dbReference>
<dbReference type="SUPFAM" id="SSF56059">
    <property type="entry name" value="Glutathione synthetase ATP-binding domain-like"/>
    <property type="match status" value="1"/>
</dbReference>
<dbReference type="SUPFAM" id="SSF52440">
    <property type="entry name" value="PreATP-grasp domain"/>
    <property type="match status" value="1"/>
</dbReference>
<dbReference type="SUPFAM" id="SSF51246">
    <property type="entry name" value="Rudiment single hybrid motif"/>
    <property type="match status" value="1"/>
</dbReference>
<dbReference type="PROSITE" id="PS50975">
    <property type="entry name" value="ATP_GRASP"/>
    <property type="match status" value="1"/>
</dbReference>
<dbReference type="PROSITE" id="PS00184">
    <property type="entry name" value="GARS"/>
    <property type="match status" value="1"/>
</dbReference>
<reference key="1">
    <citation type="journal article" date="2002" name="Nature">
        <title>Comparison of the genomes of two Xanthomonas pathogens with differing host specificities.</title>
        <authorList>
            <person name="da Silva A.C.R."/>
            <person name="Ferro J.A."/>
            <person name="Reinach F.C."/>
            <person name="Farah C.S."/>
            <person name="Furlan L.R."/>
            <person name="Quaggio R.B."/>
            <person name="Monteiro-Vitorello C.B."/>
            <person name="Van Sluys M.A."/>
            <person name="Almeida N.F. Jr."/>
            <person name="Alves L.M.C."/>
            <person name="do Amaral A.M."/>
            <person name="Bertolini M.C."/>
            <person name="Camargo L.E.A."/>
            <person name="Camarotte G."/>
            <person name="Cannavan F."/>
            <person name="Cardozo J."/>
            <person name="Chambergo F."/>
            <person name="Ciapina L.P."/>
            <person name="Cicarelli R.M.B."/>
            <person name="Coutinho L.L."/>
            <person name="Cursino-Santos J.R."/>
            <person name="El-Dorry H."/>
            <person name="Faria J.B."/>
            <person name="Ferreira A.J.S."/>
            <person name="Ferreira R.C.C."/>
            <person name="Ferro M.I.T."/>
            <person name="Formighieri E.F."/>
            <person name="Franco M.C."/>
            <person name="Greggio C.C."/>
            <person name="Gruber A."/>
            <person name="Katsuyama A.M."/>
            <person name="Kishi L.T."/>
            <person name="Leite R.P."/>
            <person name="Lemos E.G.M."/>
            <person name="Lemos M.V.F."/>
            <person name="Locali E.C."/>
            <person name="Machado M.A."/>
            <person name="Madeira A.M.B.N."/>
            <person name="Martinez-Rossi N.M."/>
            <person name="Martins E.C."/>
            <person name="Meidanis J."/>
            <person name="Menck C.F.M."/>
            <person name="Miyaki C.Y."/>
            <person name="Moon D.H."/>
            <person name="Moreira L.M."/>
            <person name="Novo M.T.M."/>
            <person name="Okura V.K."/>
            <person name="Oliveira M.C."/>
            <person name="Oliveira V.R."/>
            <person name="Pereira H.A."/>
            <person name="Rossi A."/>
            <person name="Sena J.A.D."/>
            <person name="Silva C."/>
            <person name="de Souza R.F."/>
            <person name="Spinola L.A.F."/>
            <person name="Takita M.A."/>
            <person name="Tamura R.E."/>
            <person name="Teixeira E.C."/>
            <person name="Tezza R.I.D."/>
            <person name="Trindade dos Santos M."/>
            <person name="Truffi D."/>
            <person name="Tsai S.M."/>
            <person name="White F.F."/>
            <person name="Setubal J.C."/>
            <person name="Kitajima J.P."/>
        </authorList>
    </citation>
    <scope>NUCLEOTIDE SEQUENCE [LARGE SCALE GENOMIC DNA]</scope>
    <source>
        <strain>306</strain>
    </source>
</reference>
<feature type="chain" id="PRO_0000151502" description="Phosphoribosylamine--glycine ligase">
    <location>
        <begin position="1"/>
        <end position="431"/>
    </location>
</feature>
<feature type="domain" description="ATP-grasp" evidence="2">
    <location>
        <begin position="109"/>
        <end position="316"/>
    </location>
</feature>
<feature type="binding site" evidence="2">
    <location>
        <begin position="135"/>
        <end position="196"/>
    </location>
    <ligand>
        <name>ATP</name>
        <dbReference type="ChEBI" id="CHEBI:30616"/>
    </ligand>
</feature>
<feature type="binding site" evidence="2">
    <location>
        <position position="286"/>
    </location>
    <ligand>
        <name>Mg(2+)</name>
        <dbReference type="ChEBI" id="CHEBI:18420"/>
    </ligand>
</feature>
<feature type="binding site" evidence="2">
    <location>
        <position position="288"/>
    </location>
    <ligand>
        <name>Mg(2+)</name>
        <dbReference type="ChEBI" id="CHEBI:18420"/>
    </ligand>
</feature>
<evidence type="ECO:0000250" key="1"/>
<evidence type="ECO:0000255" key="2">
    <source>
        <dbReference type="HAMAP-Rule" id="MF_00138"/>
    </source>
</evidence>
<gene>
    <name evidence="2" type="primary">purD</name>
    <name type="ordered locus">XAC0511</name>
</gene>